<gene>
    <name evidence="1" type="primary">ef1b</name>
    <name type="ordered locus">MmarC7_0646</name>
</gene>
<name>EF1B_METM7</name>
<sequence length="89" mass="9718">MATVIAKVKVMPTSPEVDKESLKATLKELVENNDAKCRGVSDEPLAFGLYTVFVMVEMEEKEGGMDPIEEAMNALENVESAEVVELSLV</sequence>
<protein>
    <recommendedName>
        <fullName evidence="1">Elongation factor 1-beta</fullName>
        <shortName evidence="1">EF-1-beta</shortName>
    </recommendedName>
    <alternativeName>
        <fullName evidence="1">aEF-1beta</fullName>
    </alternativeName>
</protein>
<dbReference type="EMBL" id="CP000745">
    <property type="protein sequence ID" value="ABR65713.1"/>
    <property type="molecule type" value="Genomic_DNA"/>
</dbReference>
<dbReference type="SMR" id="A6VGY7"/>
<dbReference type="STRING" id="426368.MmarC7_0646"/>
<dbReference type="KEGG" id="mmz:MmarC7_0646"/>
<dbReference type="eggNOG" id="arCOG01988">
    <property type="taxonomic scope" value="Archaea"/>
</dbReference>
<dbReference type="HOGENOM" id="CLU_165896_0_0_2"/>
<dbReference type="OrthoDB" id="84643at2157"/>
<dbReference type="GO" id="GO:0003746">
    <property type="term" value="F:translation elongation factor activity"/>
    <property type="evidence" value="ECO:0007669"/>
    <property type="project" value="UniProtKB-UniRule"/>
</dbReference>
<dbReference type="Gene3D" id="3.30.70.60">
    <property type="match status" value="1"/>
</dbReference>
<dbReference type="HAMAP" id="MF_00043">
    <property type="entry name" value="EF1_beta"/>
    <property type="match status" value="1"/>
</dbReference>
<dbReference type="InterPro" id="IPR036219">
    <property type="entry name" value="eEF-1beta-like_sf"/>
</dbReference>
<dbReference type="InterPro" id="IPR014038">
    <property type="entry name" value="EF1B_bsu/dsu_GNE"/>
</dbReference>
<dbReference type="InterPro" id="IPR014717">
    <property type="entry name" value="Transl_elong_EF1B/ribsomal_bS6"/>
</dbReference>
<dbReference type="InterPro" id="IPR004542">
    <property type="entry name" value="Transl_elong_EF1B_B_arc"/>
</dbReference>
<dbReference type="NCBIfam" id="TIGR00489">
    <property type="entry name" value="aEF-1_beta"/>
    <property type="match status" value="1"/>
</dbReference>
<dbReference type="NCBIfam" id="NF001670">
    <property type="entry name" value="PRK00435.1"/>
    <property type="match status" value="1"/>
</dbReference>
<dbReference type="PANTHER" id="PTHR39647">
    <property type="entry name" value="ELONGATION FACTOR 1-BETA"/>
    <property type="match status" value="1"/>
</dbReference>
<dbReference type="PANTHER" id="PTHR39647:SF1">
    <property type="entry name" value="ELONGATION FACTOR 1-BETA"/>
    <property type="match status" value="1"/>
</dbReference>
<dbReference type="Pfam" id="PF00736">
    <property type="entry name" value="EF1_GNE"/>
    <property type="match status" value="1"/>
</dbReference>
<dbReference type="PIRSF" id="PIRSF006521">
    <property type="entry name" value="Transl_elong_EF1B_B_arc"/>
    <property type="match status" value="1"/>
</dbReference>
<dbReference type="SMART" id="SM00888">
    <property type="entry name" value="EF1_GNE"/>
    <property type="match status" value="1"/>
</dbReference>
<dbReference type="SUPFAM" id="SSF54984">
    <property type="entry name" value="eEF-1beta-like"/>
    <property type="match status" value="1"/>
</dbReference>
<organism>
    <name type="scientific">Methanococcus maripaludis (strain C7 / ATCC BAA-1331)</name>
    <dbReference type="NCBI Taxonomy" id="426368"/>
    <lineage>
        <taxon>Archaea</taxon>
        <taxon>Methanobacteriati</taxon>
        <taxon>Methanobacteriota</taxon>
        <taxon>Methanomada group</taxon>
        <taxon>Methanococci</taxon>
        <taxon>Methanococcales</taxon>
        <taxon>Methanococcaceae</taxon>
        <taxon>Methanococcus</taxon>
    </lineage>
</organism>
<reference key="1">
    <citation type="submission" date="2007-06" db="EMBL/GenBank/DDBJ databases">
        <title>Complete sequence of Methanococcus maripaludis C7.</title>
        <authorList>
            <consortium name="US DOE Joint Genome Institute"/>
            <person name="Copeland A."/>
            <person name="Lucas S."/>
            <person name="Lapidus A."/>
            <person name="Barry K."/>
            <person name="Glavina del Rio T."/>
            <person name="Dalin E."/>
            <person name="Tice H."/>
            <person name="Pitluck S."/>
            <person name="Clum A."/>
            <person name="Schmutz J."/>
            <person name="Larimer F."/>
            <person name="Land M."/>
            <person name="Hauser L."/>
            <person name="Kyrpides N."/>
            <person name="Anderson I."/>
            <person name="Sieprawska-Lupa M."/>
            <person name="Whitman W.B."/>
            <person name="Richardson P."/>
        </authorList>
    </citation>
    <scope>NUCLEOTIDE SEQUENCE [LARGE SCALE GENOMIC DNA]</scope>
    <source>
        <strain>C7 / ATCC BAA-1331</strain>
    </source>
</reference>
<evidence type="ECO:0000255" key="1">
    <source>
        <dbReference type="HAMAP-Rule" id="MF_00043"/>
    </source>
</evidence>
<keyword id="KW-0251">Elongation factor</keyword>
<keyword id="KW-0648">Protein biosynthesis</keyword>
<accession>A6VGY7</accession>
<comment type="function">
    <text evidence="1">Promotes the exchange of GDP for GTP in EF-1-alpha/GDP, thus allowing the regeneration of EF-1-alpha/GTP that could then be used to form the ternary complex EF-1-alpha/GTP/AAtRNA.</text>
</comment>
<comment type="similarity">
    <text evidence="1">Belongs to the EF-1-beta/EF-1-delta family.</text>
</comment>
<feature type="chain" id="PRO_0000366429" description="Elongation factor 1-beta">
    <location>
        <begin position="1"/>
        <end position="89"/>
    </location>
</feature>
<proteinExistence type="inferred from homology"/>